<feature type="chain" id="PRO_0000273396" description="Major facilitator superfamily domain-containing protein 4A">
    <location>
        <begin position="1"/>
        <end position="510"/>
    </location>
</feature>
<feature type="transmembrane region" description="Helical" evidence="1">
    <location>
        <begin position="19"/>
        <end position="39"/>
    </location>
</feature>
<feature type="transmembrane region" description="Helical" evidence="1">
    <location>
        <begin position="53"/>
        <end position="73"/>
    </location>
</feature>
<feature type="transmembrane region" description="Helical" evidence="1">
    <location>
        <begin position="82"/>
        <end position="102"/>
    </location>
</feature>
<feature type="transmembrane region" description="Helical" evidence="1">
    <location>
        <begin position="107"/>
        <end position="127"/>
    </location>
</feature>
<feature type="transmembrane region" description="Helical" evidence="1">
    <location>
        <begin position="139"/>
        <end position="159"/>
    </location>
</feature>
<feature type="transmembrane region" description="Helical" evidence="1">
    <location>
        <begin position="218"/>
        <end position="238"/>
    </location>
</feature>
<feature type="transmembrane region" description="Helical" evidence="1">
    <location>
        <begin position="303"/>
        <end position="323"/>
    </location>
</feature>
<feature type="transmembrane region" description="Helical" evidence="1">
    <location>
        <begin position="345"/>
        <end position="365"/>
    </location>
</feature>
<feature type="transmembrane region" description="Helical" evidence="1">
    <location>
        <begin position="380"/>
        <end position="400"/>
    </location>
</feature>
<feature type="transmembrane region" description="Helical" evidence="1">
    <location>
        <begin position="401"/>
        <end position="421"/>
    </location>
</feature>
<feature type="transmembrane region" description="Helical" evidence="1">
    <location>
        <begin position="434"/>
        <end position="454"/>
    </location>
</feature>
<feature type="transmembrane region" description="Helical" evidence="1">
    <location>
        <begin position="462"/>
        <end position="482"/>
    </location>
</feature>
<feature type="splice variant" id="VSP_022541" description="In isoform 2." evidence="3">
    <location>
        <begin position="1"/>
        <end position="222"/>
    </location>
</feature>
<feature type="splice variant" id="VSP_022542" description="In isoform 3." evidence="3">
    <location>
        <begin position="228"/>
        <end position="379"/>
    </location>
</feature>
<feature type="splice variant" id="VSP_022543" description="In isoform 2 and isoform 4." evidence="2 3">
    <original>VLTQDKALGVENPECYQR</original>
    <variation>GENMILIAASSTERETHHHP</variation>
    <location>
        <begin position="493"/>
        <end position="510"/>
    </location>
</feature>
<comment type="subcellular location">
    <subcellularLocation>
        <location evidence="4">Membrane</location>
        <topology evidence="4">Multi-pass membrane protein</topology>
    </subcellularLocation>
</comment>
<comment type="alternative products">
    <event type="alternative splicing"/>
    <isoform>
        <id>Q6PDC8-1</id>
        <name>1</name>
        <sequence type="displayed"/>
    </isoform>
    <isoform>
        <id>Q6PDC8-2</id>
        <name>2</name>
        <sequence type="described" ref="VSP_022541 VSP_022543"/>
    </isoform>
    <isoform>
        <id>Q6PDC8-3</id>
        <name>3</name>
        <sequence type="described" ref="VSP_022542"/>
    </isoform>
    <isoform>
        <id>Q6PDC8-4</id>
        <name>4</name>
        <sequence type="described" ref="VSP_022543"/>
    </isoform>
</comment>
<comment type="similarity">
    <text evidence="4">Belongs to the major facilitator superfamily.</text>
</comment>
<comment type="sequence caution" evidence="4">
    <conflict type="erroneous initiation">
        <sequence resource="EMBL-CDS" id="BAC30158"/>
    </conflict>
</comment>
<evidence type="ECO:0000255" key="1"/>
<evidence type="ECO:0000303" key="2">
    <source>
    </source>
</evidence>
<evidence type="ECO:0000303" key="3">
    <source>
    </source>
</evidence>
<evidence type="ECO:0000305" key="4"/>
<evidence type="ECO:0000312" key="5">
    <source>
        <dbReference type="MGI" id="MGI:2442786"/>
    </source>
</evidence>
<proteinExistence type="evidence at transcript level"/>
<reference key="1">
    <citation type="journal article" date="2005" name="Science">
        <title>The transcriptional landscape of the mammalian genome.</title>
        <authorList>
            <person name="Carninci P."/>
            <person name="Kasukawa T."/>
            <person name="Katayama S."/>
            <person name="Gough J."/>
            <person name="Frith M.C."/>
            <person name="Maeda N."/>
            <person name="Oyama R."/>
            <person name="Ravasi T."/>
            <person name="Lenhard B."/>
            <person name="Wells C."/>
            <person name="Kodzius R."/>
            <person name="Shimokawa K."/>
            <person name="Bajic V.B."/>
            <person name="Brenner S.E."/>
            <person name="Batalov S."/>
            <person name="Forrest A.R."/>
            <person name="Zavolan M."/>
            <person name="Davis M.J."/>
            <person name="Wilming L.G."/>
            <person name="Aidinis V."/>
            <person name="Allen J.E."/>
            <person name="Ambesi-Impiombato A."/>
            <person name="Apweiler R."/>
            <person name="Aturaliya R.N."/>
            <person name="Bailey T.L."/>
            <person name="Bansal M."/>
            <person name="Baxter L."/>
            <person name="Beisel K.W."/>
            <person name="Bersano T."/>
            <person name="Bono H."/>
            <person name="Chalk A.M."/>
            <person name="Chiu K.P."/>
            <person name="Choudhary V."/>
            <person name="Christoffels A."/>
            <person name="Clutterbuck D.R."/>
            <person name="Crowe M.L."/>
            <person name="Dalla E."/>
            <person name="Dalrymple B.P."/>
            <person name="de Bono B."/>
            <person name="Della Gatta G."/>
            <person name="di Bernardo D."/>
            <person name="Down T."/>
            <person name="Engstrom P."/>
            <person name="Fagiolini M."/>
            <person name="Faulkner G."/>
            <person name="Fletcher C.F."/>
            <person name="Fukushima T."/>
            <person name="Furuno M."/>
            <person name="Futaki S."/>
            <person name="Gariboldi M."/>
            <person name="Georgii-Hemming P."/>
            <person name="Gingeras T.R."/>
            <person name="Gojobori T."/>
            <person name="Green R.E."/>
            <person name="Gustincich S."/>
            <person name="Harbers M."/>
            <person name="Hayashi Y."/>
            <person name="Hensch T.K."/>
            <person name="Hirokawa N."/>
            <person name="Hill D."/>
            <person name="Huminiecki L."/>
            <person name="Iacono M."/>
            <person name="Ikeo K."/>
            <person name="Iwama A."/>
            <person name="Ishikawa T."/>
            <person name="Jakt M."/>
            <person name="Kanapin A."/>
            <person name="Katoh M."/>
            <person name="Kawasawa Y."/>
            <person name="Kelso J."/>
            <person name="Kitamura H."/>
            <person name="Kitano H."/>
            <person name="Kollias G."/>
            <person name="Krishnan S.P."/>
            <person name="Kruger A."/>
            <person name="Kummerfeld S.K."/>
            <person name="Kurochkin I.V."/>
            <person name="Lareau L.F."/>
            <person name="Lazarevic D."/>
            <person name="Lipovich L."/>
            <person name="Liu J."/>
            <person name="Liuni S."/>
            <person name="McWilliam S."/>
            <person name="Madan Babu M."/>
            <person name="Madera M."/>
            <person name="Marchionni L."/>
            <person name="Matsuda H."/>
            <person name="Matsuzawa S."/>
            <person name="Miki H."/>
            <person name="Mignone F."/>
            <person name="Miyake S."/>
            <person name="Morris K."/>
            <person name="Mottagui-Tabar S."/>
            <person name="Mulder N."/>
            <person name="Nakano N."/>
            <person name="Nakauchi H."/>
            <person name="Ng P."/>
            <person name="Nilsson R."/>
            <person name="Nishiguchi S."/>
            <person name="Nishikawa S."/>
            <person name="Nori F."/>
            <person name="Ohara O."/>
            <person name="Okazaki Y."/>
            <person name="Orlando V."/>
            <person name="Pang K.C."/>
            <person name="Pavan W.J."/>
            <person name="Pavesi G."/>
            <person name="Pesole G."/>
            <person name="Petrovsky N."/>
            <person name="Piazza S."/>
            <person name="Reed J."/>
            <person name="Reid J.F."/>
            <person name="Ring B.Z."/>
            <person name="Ringwald M."/>
            <person name="Rost B."/>
            <person name="Ruan Y."/>
            <person name="Salzberg S.L."/>
            <person name="Sandelin A."/>
            <person name="Schneider C."/>
            <person name="Schoenbach C."/>
            <person name="Sekiguchi K."/>
            <person name="Semple C.A."/>
            <person name="Seno S."/>
            <person name="Sessa L."/>
            <person name="Sheng Y."/>
            <person name="Shibata Y."/>
            <person name="Shimada H."/>
            <person name="Shimada K."/>
            <person name="Silva D."/>
            <person name="Sinclair B."/>
            <person name="Sperling S."/>
            <person name="Stupka E."/>
            <person name="Sugiura K."/>
            <person name="Sultana R."/>
            <person name="Takenaka Y."/>
            <person name="Taki K."/>
            <person name="Tammoja K."/>
            <person name="Tan S.L."/>
            <person name="Tang S."/>
            <person name="Taylor M.S."/>
            <person name="Tegner J."/>
            <person name="Teichmann S.A."/>
            <person name="Ueda H.R."/>
            <person name="van Nimwegen E."/>
            <person name="Verardo R."/>
            <person name="Wei C.L."/>
            <person name="Yagi K."/>
            <person name="Yamanishi H."/>
            <person name="Zabarovsky E."/>
            <person name="Zhu S."/>
            <person name="Zimmer A."/>
            <person name="Hide W."/>
            <person name="Bult C."/>
            <person name="Grimmond S.M."/>
            <person name="Teasdale R.D."/>
            <person name="Liu E.T."/>
            <person name="Brusic V."/>
            <person name="Quackenbush J."/>
            <person name="Wahlestedt C."/>
            <person name="Mattick J.S."/>
            <person name="Hume D.A."/>
            <person name="Kai C."/>
            <person name="Sasaki D."/>
            <person name="Tomaru Y."/>
            <person name="Fukuda S."/>
            <person name="Kanamori-Katayama M."/>
            <person name="Suzuki M."/>
            <person name="Aoki J."/>
            <person name="Arakawa T."/>
            <person name="Iida J."/>
            <person name="Imamura K."/>
            <person name="Itoh M."/>
            <person name="Kato T."/>
            <person name="Kawaji H."/>
            <person name="Kawagashira N."/>
            <person name="Kawashima T."/>
            <person name="Kojima M."/>
            <person name="Kondo S."/>
            <person name="Konno H."/>
            <person name="Nakano K."/>
            <person name="Ninomiya N."/>
            <person name="Nishio T."/>
            <person name="Okada M."/>
            <person name="Plessy C."/>
            <person name="Shibata K."/>
            <person name="Shiraki T."/>
            <person name="Suzuki S."/>
            <person name="Tagami M."/>
            <person name="Waki K."/>
            <person name="Watahiki A."/>
            <person name="Okamura-Oho Y."/>
            <person name="Suzuki H."/>
            <person name="Kawai J."/>
            <person name="Hayashizaki Y."/>
        </authorList>
    </citation>
    <scope>NUCLEOTIDE SEQUENCE [LARGE SCALE MRNA] (ISOFORMS 2; 3 AND 4)</scope>
    <source>
        <strain>C57BL/6J</strain>
        <tissue>Cerebellum</tissue>
        <tissue>Hypothalamus</tissue>
        <tissue>Kidney</tissue>
        <tissue>Urinary bladder</tissue>
    </source>
</reference>
<reference key="2">
    <citation type="journal article" date="2009" name="PLoS Biol.">
        <title>Lineage-specific biology revealed by a finished genome assembly of the mouse.</title>
        <authorList>
            <person name="Church D.M."/>
            <person name="Goodstadt L."/>
            <person name="Hillier L.W."/>
            <person name="Zody M.C."/>
            <person name="Goldstein S."/>
            <person name="She X."/>
            <person name="Bult C.J."/>
            <person name="Agarwala R."/>
            <person name="Cherry J.L."/>
            <person name="DiCuccio M."/>
            <person name="Hlavina W."/>
            <person name="Kapustin Y."/>
            <person name="Meric P."/>
            <person name="Maglott D."/>
            <person name="Birtle Z."/>
            <person name="Marques A.C."/>
            <person name="Graves T."/>
            <person name="Zhou S."/>
            <person name="Teague B."/>
            <person name="Potamousis K."/>
            <person name="Churas C."/>
            <person name="Place M."/>
            <person name="Herschleb J."/>
            <person name="Runnheim R."/>
            <person name="Forrest D."/>
            <person name="Amos-Landgraf J."/>
            <person name="Schwartz D.C."/>
            <person name="Cheng Z."/>
            <person name="Lindblad-Toh K."/>
            <person name="Eichler E.E."/>
            <person name="Ponting C.P."/>
        </authorList>
    </citation>
    <scope>NUCLEOTIDE SEQUENCE [LARGE SCALE GENOMIC DNA]</scope>
    <source>
        <strain>C57BL/6J</strain>
    </source>
</reference>
<reference key="3">
    <citation type="journal article" date="2004" name="Genome Res.">
        <title>The status, quality, and expansion of the NIH full-length cDNA project: the Mammalian Gene Collection (MGC).</title>
        <authorList>
            <consortium name="The MGC Project Team"/>
        </authorList>
    </citation>
    <scope>NUCLEOTIDE SEQUENCE [LARGE SCALE MRNA] (ISOFORM 4)</scope>
    <source>
        <strain>FVB/N</strain>
        <tissue>Colon</tissue>
    </source>
</reference>
<dbReference type="EMBL" id="AK038882">
    <property type="protein sequence ID" value="BAC30158.1"/>
    <property type="status" value="ALT_INIT"/>
    <property type="molecule type" value="mRNA"/>
</dbReference>
<dbReference type="EMBL" id="AK048692">
    <property type="protein sequence ID" value="BAC33423.1"/>
    <property type="molecule type" value="mRNA"/>
</dbReference>
<dbReference type="EMBL" id="AK085484">
    <property type="protein sequence ID" value="BAC39455.1"/>
    <property type="molecule type" value="mRNA"/>
</dbReference>
<dbReference type="EMBL" id="AK162495">
    <property type="protein sequence ID" value="BAE36946.1"/>
    <property type="molecule type" value="mRNA"/>
</dbReference>
<dbReference type="EMBL" id="AC107837">
    <property type="status" value="NOT_ANNOTATED_CDS"/>
    <property type="molecule type" value="Genomic_DNA"/>
</dbReference>
<dbReference type="EMBL" id="BC058790">
    <property type="protein sequence ID" value="AAH58790.1"/>
    <property type="molecule type" value="mRNA"/>
</dbReference>
<dbReference type="CCDS" id="CCDS15280.2">
    <molecule id="Q6PDC8-4"/>
</dbReference>
<dbReference type="CCDS" id="CCDS48357.1">
    <molecule id="Q6PDC8-1"/>
</dbReference>
<dbReference type="RefSeq" id="NP_001108134.1">
    <molecule id="Q6PDC8-1"/>
    <property type="nucleotide sequence ID" value="NM_001114662.1"/>
</dbReference>
<dbReference type="RefSeq" id="NP_766098.2">
    <molecule id="Q6PDC8-4"/>
    <property type="nucleotide sequence ID" value="NM_172510.4"/>
</dbReference>
<dbReference type="RefSeq" id="XP_006529407.1">
    <molecule id="Q6PDC8-4"/>
    <property type="nucleotide sequence ID" value="XM_006529344.5"/>
</dbReference>
<dbReference type="RefSeq" id="XP_006529408.1">
    <molecule id="Q6PDC8-2"/>
    <property type="nucleotide sequence ID" value="XM_006529345.5"/>
</dbReference>
<dbReference type="RefSeq" id="XP_017175139.1">
    <molecule id="Q6PDC8-2"/>
    <property type="nucleotide sequence ID" value="XM_017319650.3"/>
</dbReference>
<dbReference type="RefSeq" id="XP_030108604.1">
    <molecule id="Q6PDC8-4"/>
    <property type="nucleotide sequence ID" value="XM_030252744.2"/>
</dbReference>
<dbReference type="FunCoup" id="Q6PDC8">
    <property type="interactions" value="24"/>
</dbReference>
<dbReference type="STRING" id="10090.ENSMUSP00000116282"/>
<dbReference type="GlyGen" id="Q6PDC8">
    <property type="glycosylation" value="1 site, 1 N-linked glycan (1 site)"/>
</dbReference>
<dbReference type="iPTMnet" id="Q6PDC8"/>
<dbReference type="PhosphoSitePlus" id="Q6PDC8"/>
<dbReference type="SwissPalm" id="Q6PDC8"/>
<dbReference type="PaxDb" id="10090-ENSMUSP00000107989"/>
<dbReference type="ProteomicsDB" id="252543">
    <molecule id="Q6PDC8-1"/>
</dbReference>
<dbReference type="ProteomicsDB" id="252544">
    <molecule id="Q6PDC8-2"/>
</dbReference>
<dbReference type="ProteomicsDB" id="252545">
    <molecule id="Q6PDC8-3"/>
</dbReference>
<dbReference type="ProteomicsDB" id="252546">
    <molecule id="Q6PDC8-4"/>
</dbReference>
<dbReference type="Antibodypedia" id="34569">
    <property type="antibodies" value="80 antibodies from 15 providers"/>
</dbReference>
<dbReference type="DNASU" id="213006"/>
<dbReference type="Ensembl" id="ENSMUST00000046658.10">
    <molecule id="Q6PDC8-3"/>
    <property type="protein sequence ID" value="ENSMUSP00000039635.4"/>
    <property type="gene ID" value="ENSMUSG00000059149.18"/>
</dbReference>
<dbReference type="Ensembl" id="ENSMUST00000112370.9">
    <molecule id="Q6PDC8-4"/>
    <property type="protein sequence ID" value="ENSMUSP00000107989.3"/>
    <property type="gene ID" value="ENSMUSG00000059149.18"/>
</dbReference>
<dbReference type="Ensembl" id="ENSMUST00000126927.8">
    <molecule id="Q6PDC8-4"/>
    <property type="protein sequence ID" value="ENSMUSP00000116706.2"/>
    <property type="gene ID" value="ENSMUSG00000059149.18"/>
</dbReference>
<dbReference type="Ensembl" id="ENSMUST00000144548.9">
    <molecule id="Q6PDC8-4"/>
    <property type="protein sequence ID" value="ENSMUSP00000116282.3"/>
    <property type="gene ID" value="ENSMUSG00000059149.18"/>
</dbReference>
<dbReference type="Ensembl" id="ENSMUST00000159038.8">
    <molecule id="Q6PDC8-1"/>
    <property type="protein sequence ID" value="ENSMUSP00000125558.2"/>
    <property type="gene ID" value="ENSMUSG00000059149.18"/>
</dbReference>
<dbReference type="GeneID" id="213006"/>
<dbReference type="KEGG" id="mmu:213006"/>
<dbReference type="UCSC" id="uc007coe.2">
    <molecule id="Q6PDC8-4"/>
    <property type="organism name" value="mouse"/>
</dbReference>
<dbReference type="UCSC" id="uc007cog.2">
    <molecule id="Q6PDC8-3"/>
    <property type="organism name" value="mouse"/>
</dbReference>
<dbReference type="UCSC" id="uc011wrs.1">
    <molecule id="Q6PDC8-2"/>
    <property type="organism name" value="mouse"/>
</dbReference>
<dbReference type="UCSC" id="uc011wru.1">
    <molecule id="Q6PDC8-1"/>
    <property type="organism name" value="mouse"/>
</dbReference>
<dbReference type="AGR" id="MGI:2442786"/>
<dbReference type="CTD" id="148808"/>
<dbReference type="MGI" id="MGI:2442786">
    <property type="gene designation" value="Mfsd4a"/>
</dbReference>
<dbReference type="VEuPathDB" id="HostDB:ENSMUSG00000059149"/>
<dbReference type="eggNOG" id="ENOG502QRVK">
    <property type="taxonomic scope" value="Eukaryota"/>
</dbReference>
<dbReference type="GeneTree" id="ENSGT00530000063320"/>
<dbReference type="InParanoid" id="Q6PDC8"/>
<dbReference type="OMA" id="WRWDARV"/>
<dbReference type="OrthoDB" id="22845at9989"/>
<dbReference type="PhylomeDB" id="Q6PDC8"/>
<dbReference type="TreeFam" id="TF314613"/>
<dbReference type="BioGRID-ORCS" id="213006">
    <property type="hits" value="2 hits in 78 CRISPR screens"/>
</dbReference>
<dbReference type="ChiTaRS" id="Mfsd4a">
    <property type="organism name" value="mouse"/>
</dbReference>
<dbReference type="PRO" id="PR:Q6PDC8"/>
<dbReference type="Proteomes" id="UP000000589">
    <property type="component" value="Chromosome 1"/>
</dbReference>
<dbReference type="RNAct" id="Q6PDC8">
    <property type="molecule type" value="protein"/>
</dbReference>
<dbReference type="Bgee" id="ENSMUSG00000059149">
    <property type="expression patterns" value="Expressed in epithelium of stomach and 209 other cell types or tissues"/>
</dbReference>
<dbReference type="ExpressionAtlas" id="Q6PDC8">
    <property type="expression patterns" value="baseline and differential"/>
</dbReference>
<dbReference type="GO" id="GO:0016020">
    <property type="term" value="C:membrane"/>
    <property type="evidence" value="ECO:0007669"/>
    <property type="project" value="UniProtKB-SubCell"/>
</dbReference>
<dbReference type="GO" id="GO:0022857">
    <property type="term" value="F:transmembrane transporter activity"/>
    <property type="evidence" value="ECO:0007669"/>
    <property type="project" value="InterPro"/>
</dbReference>
<dbReference type="CDD" id="cd17453">
    <property type="entry name" value="MFS_MFSD4A"/>
    <property type="match status" value="1"/>
</dbReference>
<dbReference type="Gene3D" id="1.20.1250.20">
    <property type="entry name" value="MFS general substrate transporter like domains"/>
    <property type="match status" value="2"/>
</dbReference>
<dbReference type="InterPro" id="IPR011701">
    <property type="entry name" value="MFS"/>
</dbReference>
<dbReference type="InterPro" id="IPR036259">
    <property type="entry name" value="MFS_trans_sf"/>
</dbReference>
<dbReference type="PANTHER" id="PTHR23121:SF10">
    <property type="entry name" value="MAJOR FACILITATOR SUPERFAMILY DOMAIN-CONTAINING PROTEIN 4A"/>
    <property type="match status" value="1"/>
</dbReference>
<dbReference type="PANTHER" id="PTHR23121">
    <property type="entry name" value="SODIUM-DEPENDENT GLUCOSE TRANSPORTER 1"/>
    <property type="match status" value="1"/>
</dbReference>
<dbReference type="Pfam" id="PF07690">
    <property type="entry name" value="MFS_1"/>
    <property type="match status" value="1"/>
</dbReference>
<dbReference type="SUPFAM" id="SSF103473">
    <property type="entry name" value="MFS general substrate transporter"/>
    <property type="match status" value="1"/>
</dbReference>
<accession>Q6PDC8</accession>
<accession>Q8C3M3</accession>
<accession>Q8C816</accession>
<accession>Q8CAF5</accession>
<protein>
    <recommendedName>
        <fullName>Major facilitator superfamily domain-containing protein 4A</fullName>
    </recommendedName>
    <alternativeName>
        <fullName>Major facilitator superfamily domain-containing protein 4</fullName>
    </alternativeName>
</protein>
<sequence>MGCDGRVSELLRRNLQPTLTYWSVFFSFGLCIAFLGPTLLDLRCQTHSSLPQISWVFFSQQLCLLLGSALGGVFKRTLAQSLWALFTSTLVISLVFAVIPFCHDVKVLASVIALAGLAMGCIDTVANMQLVRIYQKDSAFFLQVLHFFVGLGALLSPLIADPFLSEANCFPANNTANATSRSHGSRVLSQHHAAAQPWINQTIPRLPPKEVTENHVSYAFWIMALINLPVPLAVLFLLSKERLLTCAQRKPLLLSADELALETRPAEKEDTSSLAPKFQPHSGQEDLFSCCQRKNFRGAPCSFFAIHITAALVLFMTDGMMGAYSAFVYSYAVEKPLSIGHKSAGYLPSLFWGFITLGRFISIPVSSRMRPATMVFINVVGVVVTFLMLLIFSYNVIFLFVGTASLGLFLSSTFPSMLAYTEDILQYKGCATTVLVTGAGIGEMVLQMLVGLIFQAQGSYSFLVCGVIFGCLAFIFYILLLFFHRIHPELSSVLTQDKALGVENPECYQR</sequence>
<organism>
    <name type="scientific">Mus musculus</name>
    <name type="common">Mouse</name>
    <dbReference type="NCBI Taxonomy" id="10090"/>
    <lineage>
        <taxon>Eukaryota</taxon>
        <taxon>Metazoa</taxon>
        <taxon>Chordata</taxon>
        <taxon>Craniata</taxon>
        <taxon>Vertebrata</taxon>
        <taxon>Euteleostomi</taxon>
        <taxon>Mammalia</taxon>
        <taxon>Eutheria</taxon>
        <taxon>Euarchontoglires</taxon>
        <taxon>Glires</taxon>
        <taxon>Rodentia</taxon>
        <taxon>Myomorpha</taxon>
        <taxon>Muroidea</taxon>
        <taxon>Muridae</taxon>
        <taxon>Murinae</taxon>
        <taxon>Mus</taxon>
        <taxon>Mus</taxon>
    </lineage>
</organism>
<name>MFD4A_MOUSE</name>
<gene>
    <name evidence="5" type="primary">Mfsd4a</name>
    <name type="synonym">Mfsd4</name>
</gene>
<keyword id="KW-0025">Alternative splicing</keyword>
<keyword id="KW-0472">Membrane</keyword>
<keyword id="KW-1185">Reference proteome</keyword>
<keyword id="KW-0812">Transmembrane</keyword>
<keyword id="KW-1133">Transmembrane helix</keyword>
<keyword id="KW-0813">Transport</keyword>